<protein>
    <recommendedName>
        <fullName evidence="1">Glucose-6-phosphate 1-dehydrogenase</fullName>
        <shortName evidence="1">G6PD</shortName>
        <ecNumber evidence="1">1.1.1.49</ecNumber>
    </recommendedName>
</protein>
<feature type="chain" id="PRO_0000068124" description="Glucose-6-phosphate 1-dehydrogenase">
    <location>
        <begin position="1"/>
        <end position="425"/>
    </location>
</feature>
<feature type="active site" description="Proton acceptor" evidence="1">
    <location>
        <position position="225"/>
    </location>
</feature>
<feature type="binding site" evidence="1">
    <location>
        <position position="44"/>
    </location>
    <ligand>
        <name>NADP(+)</name>
        <dbReference type="ChEBI" id="CHEBI:58349"/>
    </ligand>
</feature>
<feature type="binding site" evidence="1">
    <location>
        <position position="135"/>
    </location>
    <ligand>
        <name>NADP(+)</name>
        <dbReference type="ChEBI" id="CHEBI:58349"/>
    </ligand>
</feature>
<feature type="binding site" evidence="1">
    <location>
        <position position="165"/>
    </location>
    <ligand>
        <name>substrate</name>
    </ligand>
</feature>
<feature type="binding site" evidence="1">
    <location>
        <position position="169"/>
    </location>
    <ligand>
        <name>substrate</name>
    </ligand>
</feature>
<feature type="binding site" evidence="1">
    <location>
        <position position="201"/>
    </location>
    <ligand>
        <name>substrate</name>
    </ligand>
</feature>
<feature type="binding site" evidence="1">
    <location>
        <position position="220"/>
    </location>
    <ligand>
        <name>substrate</name>
    </ligand>
</feature>
<feature type="binding site" evidence="1">
    <location>
        <position position="311"/>
    </location>
    <ligand>
        <name>substrate</name>
    </ligand>
</feature>
<gene>
    <name evidence="1" type="primary">zwf</name>
    <name type="ordered locus">jhp_1027</name>
</gene>
<sequence length="425" mass="49456">MLDFDLVLFGATGDLAMRKLFVSLYEIYIHYGFKNDSRIIASGRKELSNEEFLALLCEKTQLHSREKGEEFLTHISYLRVRLDNPKDFEELSKIATNNKPLIFYFSISPSFFATTAQNLAQNALNHANTRLILEKPLGHDLKTCKEIFQSISAFFKEEQIFRIDHYLGKKGVQNILELRLNNPILNILWDQISAVEICVYETLGVEERGEFYDKIGALRDMVQNHLLQVLSLIATDLPNDLKDLRQEKIKVLKTLQPPKDFTKQVIRAQYQGYRDENKVHKESQTETFVAIKAFLDTPKFKGVPFYLKHAKKMPRNQASVKIHFNAVNTLEFFLSQDKITLTLKDHQNPLILETHNKQEFLQPYAKLLYDAIPNNHYNFAHQLELEASWVFIDTLIEGFINNATPLYSYESHNLNESEFLKPLYQ</sequence>
<proteinExistence type="inferred from homology"/>
<name>G6PD_HELPJ</name>
<comment type="function">
    <text evidence="1">Catalyzes the oxidation of glucose 6-phosphate to 6-phosphogluconolactone.</text>
</comment>
<comment type="catalytic activity">
    <reaction evidence="1">
        <text>D-glucose 6-phosphate + NADP(+) = 6-phospho-D-glucono-1,5-lactone + NADPH + H(+)</text>
        <dbReference type="Rhea" id="RHEA:15841"/>
        <dbReference type="ChEBI" id="CHEBI:15378"/>
        <dbReference type="ChEBI" id="CHEBI:57783"/>
        <dbReference type="ChEBI" id="CHEBI:57955"/>
        <dbReference type="ChEBI" id="CHEBI:58349"/>
        <dbReference type="ChEBI" id="CHEBI:61548"/>
        <dbReference type="EC" id="1.1.1.49"/>
    </reaction>
</comment>
<comment type="pathway">
    <text evidence="1">Carbohydrate degradation; pentose phosphate pathway; D-ribulose 5-phosphate from D-glucose 6-phosphate (oxidative stage): step 1/3.</text>
</comment>
<comment type="similarity">
    <text evidence="1">Belongs to the glucose-6-phosphate dehydrogenase family.</text>
</comment>
<organism>
    <name type="scientific">Helicobacter pylori (strain J99 / ATCC 700824)</name>
    <name type="common">Campylobacter pylori J99</name>
    <dbReference type="NCBI Taxonomy" id="85963"/>
    <lineage>
        <taxon>Bacteria</taxon>
        <taxon>Pseudomonadati</taxon>
        <taxon>Campylobacterota</taxon>
        <taxon>Epsilonproteobacteria</taxon>
        <taxon>Campylobacterales</taxon>
        <taxon>Helicobacteraceae</taxon>
        <taxon>Helicobacter</taxon>
    </lineage>
</organism>
<reference key="1">
    <citation type="journal article" date="1999" name="Nature">
        <title>Genomic sequence comparison of two unrelated isolates of the human gastric pathogen Helicobacter pylori.</title>
        <authorList>
            <person name="Alm R.A."/>
            <person name="Ling L.-S.L."/>
            <person name="Moir D.T."/>
            <person name="King B.L."/>
            <person name="Brown E.D."/>
            <person name="Doig P.C."/>
            <person name="Smith D.R."/>
            <person name="Noonan B."/>
            <person name="Guild B.C."/>
            <person name="deJonge B.L."/>
            <person name="Carmel G."/>
            <person name="Tummino P.J."/>
            <person name="Caruso A."/>
            <person name="Uria-Nickelsen M."/>
            <person name="Mills D.M."/>
            <person name="Ives C."/>
            <person name="Gibson R."/>
            <person name="Merberg D."/>
            <person name="Mills S.D."/>
            <person name="Jiang Q."/>
            <person name="Taylor D.E."/>
            <person name="Vovis G.F."/>
            <person name="Trust T.J."/>
        </authorList>
    </citation>
    <scope>NUCLEOTIDE SEQUENCE [LARGE SCALE GENOMIC DNA]</scope>
    <source>
        <strain>J99 / ATCC 700824</strain>
    </source>
</reference>
<accession>Q9ZKB2</accession>
<keyword id="KW-0119">Carbohydrate metabolism</keyword>
<keyword id="KW-0313">Glucose metabolism</keyword>
<keyword id="KW-0521">NADP</keyword>
<keyword id="KW-0560">Oxidoreductase</keyword>
<evidence type="ECO:0000255" key="1">
    <source>
        <dbReference type="HAMAP-Rule" id="MF_00966"/>
    </source>
</evidence>
<dbReference type="EC" id="1.1.1.49" evidence="1"/>
<dbReference type="EMBL" id="AE001439">
    <property type="protein sequence ID" value="AAD06598.1"/>
    <property type="molecule type" value="Genomic_DNA"/>
</dbReference>
<dbReference type="PIR" id="F71859">
    <property type="entry name" value="F71859"/>
</dbReference>
<dbReference type="RefSeq" id="WP_000883530.1">
    <property type="nucleotide sequence ID" value="NC_000921.1"/>
</dbReference>
<dbReference type="SMR" id="Q9ZKB2"/>
<dbReference type="KEGG" id="hpj:jhp_1027"/>
<dbReference type="eggNOG" id="COG0364">
    <property type="taxonomic scope" value="Bacteria"/>
</dbReference>
<dbReference type="UniPathway" id="UPA00115">
    <property type="reaction ID" value="UER00408"/>
</dbReference>
<dbReference type="Proteomes" id="UP000000804">
    <property type="component" value="Chromosome"/>
</dbReference>
<dbReference type="GO" id="GO:0005829">
    <property type="term" value="C:cytosol"/>
    <property type="evidence" value="ECO:0007669"/>
    <property type="project" value="TreeGrafter"/>
</dbReference>
<dbReference type="GO" id="GO:0004345">
    <property type="term" value="F:glucose-6-phosphate dehydrogenase activity"/>
    <property type="evidence" value="ECO:0007669"/>
    <property type="project" value="UniProtKB-UniRule"/>
</dbReference>
<dbReference type="GO" id="GO:0050661">
    <property type="term" value="F:NADP binding"/>
    <property type="evidence" value="ECO:0007669"/>
    <property type="project" value="UniProtKB-UniRule"/>
</dbReference>
<dbReference type="GO" id="GO:0006006">
    <property type="term" value="P:glucose metabolic process"/>
    <property type="evidence" value="ECO:0007669"/>
    <property type="project" value="UniProtKB-KW"/>
</dbReference>
<dbReference type="GO" id="GO:0009051">
    <property type="term" value="P:pentose-phosphate shunt, oxidative branch"/>
    <property type="evidence" value="ECO:0007669"/>
    <property type="project" value="TreeGrafter"/>
</dbReference>
<dbReference type="Gene3D" id="3.30.360.10">
    <property type="entry name" value="Dihydrodipicolinate Reductase, domain 2"/>
    <property type="match status" value="1"/>
</dbReference>
<dbReference type="Gene3D" id="3.40.50.720">
    <property type="entry name" value="NAD(P)-binding Rossmann-like Domain"/>
    <property type="match status" value="1"/>
</dbReference>
<dbReference type="HAMAP" id="MF_00966">
    <property type="entry name" value="G6PD"/>
    <property type="match status" value="1"/>
</dbReference>
<dbReference type="InterPro" id="IPR001282">
    <property type="entry name" value="G6P_DH"/>
</dbReference>
<dbReference type="InterPro" id="IPR019796">
    <property type="entry name" value="G6P_DH_AS"/>
</dbReference>
<dbReference type="InterPro" id="IPR022675">
    <property type="entry name" value="G6P_DH_C"/>
</dbReference>
<dbReference type="InterPro" id="IPR022674">
    <property type="entry name" value="G6P_DH_NAD-bd"/>
</dbReference>
<dbReference type="InterPro" id="IPR036291">
    <property type="entry name" value="NAD(P)-bd_dom_sf"/>
</dbReference>
<dbReference type="NCBIfam" id="NF004331">
    <property type="entry name" value="PRK05722.2-1"/>
    <property type="match status" value="1"/>
</dbReference>
<dbReference type="PANTHER" id="PTHR23429:SF0">
    <property type="entry name" value="GLUCOSE-6-PHOSPHATE 1-DEHYDROGENASE"/>
    <property type="match status" value="1"/>
</dbReference>
<dbReference type="PANTHER" id="PTHR23429">
    <property type="entry name" value="GLUCOSE-6-PHOSPHATE 1-DEHYDROGENASE G6PD"/>
    <property type="match status" value="1"/>
</dbReference>
<dbReference type="Pfam" id="PF02781">
    <property type="entry name" value="G6PD_C"/>
    <property type="match status" value="1"/>
</dbReference>
<dbReference type="Pfam" id="PF00479">
    <property type="entry name" value="G6PD_N"/>
    <property type="match status" value="1"/>
</dbReference>
<dbReference type="PIRSF" id="PIRSF000110">
    <property type="entry name" value="G6PD"/>
    <property type="match status" value="1"/>
</dbReference>
<dbReference type="PRINTS" id="PR00079">
    <property type="entry name" value="G6PDHDRGNASE"/>
</dbReference>
<dbReference type="SUPFAM" id="SSF55347">
    <property type="entry name" value="Glyceraldehyde-3-phosphate dehydrogenase-like, C-terminal domain"/>
    <property type="match status" value="1"/>
</dbReference>
<dbReference type="SUPFAM" id="SSF51735">
    <property type="entry name" value="NAD(P)-binding Rossmann-fold domains"/>
    <property type="match status" value="1"/>
</dbReference>
<dbReference type="PROSITE" id="PS00069">
    <property type="entry name" value="G6P_DEHYDROGENASE"/>
    <property type="match status" value="1"/>
</dbReference>